<accession>P08994</accession>
<sequence>MAPKKAPAATTEKKVKKAPTTEKKNKKKRSETFAIYIFKVLKQVHPDVGISKKAMNIMNSFINDSFERIALESSKLVRFNKRRTLSSREVQTAVKLLLPGELARHAISEGTKAVTKFSSSSN</sequence>
<organism>
    <name type="scientific">Tetrahymena thermophila (strain SB210)</name>
    <dbReference type="NCBI Taxonomy" id="312017"/>
    <lineage>
        <taxon>Eukaryota</taxon>
        <taxon>Sar</taxon>
        <taxon>Alveolata</taxon>
        <taxon>Ciliophora</taxon>
        <taxon>Intramacronucleata</taxon>
        <taxon>Oligohymenophorea</taxon>
        <taxon>Hymenostomatida</taxon>
        <taxon>Tetrahymenina</taxon>
        <taxon>Tetrahymenidae</taxon>
        <taxon>Tetrahymena</taxon>
    </lineage>
</organism>
<comment type="function">
    <text>Core component of nucleosome. Nucleosomes wrap and compact DNA into chromatin, limiting DNA accessibility to the cellular machineries which require DNA as a template. Histones thereby play a central role in transcription regulation, DNA repair, DNA replication and chromosomal stability. DNA accessibility is regulated via a complex set of post-translational modifications of histones, also called histone code, and nucleosome remodeling.</text>
</comment>
<comment type="subunit">
    <text>The nucleosome is a histone octamer containing two molecules each of H2A, H2B, H3 and H4 assembled in one H3-H4 heterotetramer and two H2A-H2B heterodimers. The octamer wraps approximately 147 bp of DNA.</text>
</comment>
<comment type="subcellular location">
    <subcellularLocation>
        <location>Nucleus</location>
    </subcellularLocation>
    <subcellularLocation>
        <location>Chromosome</location>
    </subcellularLocation>
    <text>Macronuclei.</text>
</comment>
<comment type="PTM">
    <text evidence="3 4">Acetylation occurs almost exclusively in the MAC.</text>
</comment>
<comment type="PTM">
    <text evidence="5">Monoubiquitination to form H2BK115ub1 gives a specific tag for epigenetic transcriptional activation and is also prerequisite for H3K4me and H3K79me formation.</text>
</comment>
<comment type="similarity">
    <text evidence="5">Belongs to the histone H2B family.</text>
</comment>
<comment type="caution">
    <text evidence="5">To ensure consistency between histone entries, we follow the 'Brno' nomenclature for histone modifications, with positions referring to those used in the literature for the 'closest' model organism. Due to slight variations in histone sequences between organisms and to the presence of initiator methionine in UniProtKB/Swiss-Prot sequences, the actual positions of modified amino acids in the sequence generally differ. In this entry the following conventions are used: H2BK4ac = acetylated Lys-5; H2BK41ac = acetylated Lys-42; H2BK115ub1 = monoubiquitinated Lys-116.</text>
</comment>
<evidence type="ECO:0000250" key="1"/>
<evidence type="ECO:0000256" key="2">
    <source>
        <dbReference type="SAM" id="MobiDB-lite"/>
    </source>
</evidence>
<evidence type="ECO:0000269" key="3">
    <source>
    </source>
</evidence>
<evidence type="ECO:0000269" key="4">
    <source>
    </source>
</evidence>
<evidence type="ECO:0000305" key="5"/>
<evidence type="ECO:0000305" key="6">
    <source>
    </source>
</evidence>
<gene>
    <name type="primary">HTB2</name>
    <name type="ORF">TTHERM_00283180</name>
</gene>
<name>H2B2_TETTS</name>
<keyword id="KW-0007">Acetylation</keyword>
<keyword id="KW-0158">Chromosome</keyword>
<keyword id="KW-0238">DNA-binding</keyword>
<keyword id="KW-1017">Isopeptide bond</keyword>
<keyword id="KW-0488">Methylation</keyword>
<keyword id="KW-0544">Nucleosome core</keyword>
<keyword id="KW-0539">Nucleus</keyword>
<keyword id="KW-1185">Reference proteome</keyword>
<keyword id="KW-0832">Ubl conjugation</keyword>
<reference key="1">
    <citation type="journal article" date="1987" name="Nucleic Acids Res.">
        <title>Characterization of two types of histone H2B genes from macronuclei of Tetrahymena thermophila.</title>
        <authorList>
            <person name="Nomoto M."/>
            <person name="Imai N."/>
            <person name="Saiga H."/>
            <person name="Matsui T."/>
            <person name="Mita T."/>
        </authorList>
    </citation>
    <scope>NUCLEOTIDE SEQUENCE [GENOMIC DNA]</scope>
</reference>
<reference key="2">
    <citation type="journal article" date="2006" name="PLoS Biol.">
        <title>Macronuclear genome sequence of the ciliate Tetrahymena thermophila, a model eukaryote.</title>
        <authorList>
            <person name="Eisen J.A."/>
            <person name="Coyne R.S."/>
            <person name="Wu M."/>
            <person name="Wu D."/>
            <person name="Thiagarajan M."/>
            <person name="Wortman J.R."/>
            <person name="Badger J.H."/>
            <person name="Ren Q."/>
            <person name="Amedeo P."/>
            <person name="Jones K.M."/>
            <person name="Tallon L.J."/>
            <person name="Delcher A.L."/>
            <person name="Salzberg S.L."/>
            <person name="Silva J.C."/>
            <person name="Haas B.J."/>
            <person name="Majoros W.H."/>
            <person name="Farzad M."/>
            <person name="Carlton J.M."/>
            <person name="Smith R.K. Jr."/>
            <person name="Garg J."/>
            <person name="Pearlman R.E."/>
            <person name="Karrer K.M."/>
            <person name="Sun L."/>
            <person name="Manning G."/>
            <person name="Elde N.C."/>
            <person name="Turkewitz A.P."/>
            <person name="Asai D.J."/>
            <person name="Wilkes D.E."/>
            <person name="Wang Y."/>
            <person name="Cai H."/>
            <person name="Collins K."/>
            <person name="Stewart B.A."/>
            <person name="Lee S.R."/>
            <person name="Wilamowska K."/>
            <person name="Weinberg Z."/>
            <person name="Ruzzo W.L."/>
            <person name="Wloga D."/>
            <person name="Gaertig J."/>
            <person name="Frankel J."/>
            <person name="Tsao C.-C."/>
            <person name="Gorovsky M.A."/>
            <person name="Keeling P.J."/>
            <person name="Waller R.F."/>
            <person name="Patron N.J."/>
            <person name="Cherry J.M."/>
            <person name="Stover N.A."/>
            <person name="Krieger C.J."/>
            <person name="del Toro C."/>
            <person name="Ryder H.F."/>
            <person name="Williamson S.C."/>
            <person name="Barbeau R.A."/>
            <person name="Hamilton E.P."/>
            <person name="Orias E."/>
        </authorList>
    </citation>
    <scope>NUCLEOTIDE SEQUENCE [LARGE SCALE GENOMIC DNA]</scope>
    <source>
        <strain>SB210</strain>
    </source>
</reference>
<reference key="3">
    <citation type="journal article" date="1982" name="J. Biol. Chem.">
        <title>Regulation of histone acetylation in Tetrahymena macro- and micronuclei.</title>
        <authorList>
            <person name="Vavra K.J."/>
            <person name="Allis C.D."/>
            <person name="Gorovsky M.A."/>
        </authorList>
    </citation>
    <scope>ACETYLATION</scope>
    <source>
        <strain>B</strain>
    </source>
</reference>
<reference key="4">
    <citation type="journal article" date="1989" name="Biochemistry">
        <title>Ubiquitinated histone H2B is preferentially located in transcriptionally active chromatin.</title>
        <authorList>
            <person name="Nickel B.E."/>
            <person name="Allis C.D."/>
            <person name="Davie J.R."/>
        </authorList>
    </citation>
    <scope>UBIQUITINATION</scope>
</reference>
<reference key="5">
    <citation type="journal article" date="2004" name="Mol. Cell. Proteomics">
        <title>Characterization of Tetrahymena histone H2B variants and posttranslational populations by electron capture dissociation (ECD) Fourier transform ion cyclotron mass spectrometry (FT-ICR MS).</title>
        <authorList>
            <person name="Medzihradszky K.F."/>
            <person name="Zhang X."/>
            <person name="Chalkley R.J."/>
            <person name="Guan S."/>
            <person name="McFarland M.A."/>
            <person name="Chalmers M.J."/>
            <person name="Marshall A.G."/>
            <person name="Diaz R.L."/>
            <person name="Allis C.D."/>
            <person name="Burlingame A.L."/>
        </authorList>
    </citation>
    <scope>METHYLATION AT ALA-2</scope>
    <scope>ACETYLATION AT LYS-5 AND LYS-42</scope>
    <scope>IDENTIFICATION BY MASS SPECTROMETRY</scope>
    <source>
        <strain>CU427</strain>
        <strain>CU428</strain>
    </source>
</reference>
<proteinExistence type="evidence at protein level"/>
<feature type="initiator methionine" description="Removed" evidence="1">
    <location>
        <position position="1"/>
    </location>
</feature>
<feature type="chain" id="PRO_0000071906" description="Histone H2B.2">
    <location>
        <begin position="2"/>
        <end position="122"/>
    </location>
</feature>
<feature type="region of interest" description="Disordered" evidence="2">
    <location>
        <begin position="1"/>
        <end position="28"/>
    </location>
</feature>
<feature type="compositionally biased region" description="Low complexity" evidence="2">
    <location>
        <begin position="1"/>
        <end position="10"/>
    </location>
</feature>
<feature type="modified residue" description="N,N,N-trimethylalanine" evidence="3">
    <location>
        <position position="2"/>
    </location>
</feature>
<feature type="modified residue" description="N6-acetyllysine" evidence="3">
    <location>
        <position position="5"/>
    </location>
</feature>
<feature type="modified residue" description="N6-acetyllysine" evidence="3">
    <location>
        <position position="42"/>
    </location>
</feature>
<feature type="cross-link" description="Glycyl lysine isopeptide (Lys-Gly) (interchain with G-Cter in ubiquitin)" evidence="6">
    <location>
        <position position="116"/>
    </location>
</feature>
<protein>
    <recommendedName>
        <fullName>Histone H2B.2</fullName>
        <shortName>H2B-2</shortName>
    </recommendedName>
</protein>
<dbReference type="EMBL" id="X05544">
    <property type="protein sequence ID" value="CAA29060.1"/>
    <property type="molecule type" value="Genomic_DNA"/>
</dbReference>
<dbReference type="EMBL" id="GG662656">
    <property type="protein sequence ID" value="EAR97929.2"/>
    <property type="molecule type" value="Genomic_DNA"/>
</dbReference>
<dbReference type="PIR" id="B27097">
    <property type="entry name" value="B27097"/>
</dbReference>
<dbReference type="RefSeq" id="XP_001018174.2">
    <property type="nucleotide sequence ID" value="XM_001018174.2"/>
</dbReference>
<dbReference type="SMR" id="P08994"/>
<dbReference type="FunCoup" id="P08994">
    <property type="interactions" value="24"/>
</dbReference>
<dbReference type="STRING" id="312017.P08994"/>
<dbReference type="iPTMnet" id="P08994"/>
<dbReference type="GeneID" id="7837957"/>
<dbReference type="KEGG" id="tet:TTHERM_00283180"/>
<dbReference type="eggNOG" id="KOG1744">
    <property type="taxonomic scope" value="Eukaryota"/>
</dbReference>
<dbReference type="InParanoid" id="P08994"/>
<dbReference type="OrthoDB" id="305527at2759"/>
<dbReference type="Proteomes" id="UP000009168">
    <property type="component" value="Unassembled WGS sequence"/>
</dbReference>
<dbReference type="GO" id="GO:0000786">
    <property type="term" value="C:nucleosome"/>
    <property type="evidence" value="ECO:0007669"/>
    <property type="project" value="UniProtKB-KW"/>
</dbReference>
<dbReference type="GO" id="GO:0005634">
    <property type="term" value="C:nucleus"/>
    <property type="evidence" value="ECO:0007669"/>
    <property type="project" value="UniProtKB-SubCell"/>
</dbReference>
<dbReference type="GO" id="GO:0003677">
    <property type="term" value="F:DNA binding"/>
    <property type="evidence" value="ECO:0007669"/>
    <property type="project" value="UniProtKB-KW"/>
</dbReference>
<dbReference type="GO" id="GO:0046982">
    <property type="term" value="F:protein heterodimerization activity"/>
    <property type="evidence" value="ECO:0007669"/>
    <property type="project" value="InterPro"/>
</dbReference>
<dbReference type="GO" id="GO:0030527">
    <property type="term" value="F:structural constituent of chromatin"/>
    <property type="evidence" value="ECO:0007669"/>
    <property type="project" value="InterPro"/>
</dbReference>
<dbReference type="CDD" id="cd22910">
    <property type="entry name" value="HFD_H2B"/>
    <property type="match status" value="1"/>
</dbReference>
<dbReference type="FunFam" id="1.10.20.10:FF:000016">
    <property type="entry name" value="Histone H2B"/>
    <property type="match status" value="1"/>
</dbReference>
<dbReference type="Gene3D" id="1.10.20.10">
    <property type="entry name" value="Histone, subunit A"/>
    <property type="match status" value="1"/>
</dbReference>
<dbReference type="InterPro" id="IPR009072">
    <property type="entry name" value="Histone-fold"/>
</dbReference>
<dbReference type="InterPro" id="IPR007125">
    <property type="entry name" value="Histone_H2A/H2B/H3"/>
</dbReference>
<dbReference type="InterPro" id="IPR000558">
    <property type="entry name" value="Histone_H2B"/>
</dbReference>
<dbReference type="InterPro" id="IPR055333">
    <property type="entry name" value="HISTONE_H2B_site"/>
</dbReference>
<dbReference type="PANTHER" id="PTHR23428">
    <property type="entry name" value="HISTONE H2B"/>
    <property type="match status" value="1"/>
</dbReference>
<dbReference type="Pfam" id="PF00125">
    <property type="entry name" value="Histone"/>
    <property type="match status" value="1"/>
</dbReference>
<dbReference type="PRINTS" id="PR00621">
    <property type="entry name" value="HISTONEH2B"/>
</dbReference>
<dbReference type="SMART" id="SM00427">
    <property type="entry name" value="H2B"/>
    <property type="match status" value="1"/>
</dbReference>
<dbReference type="SUPFAM" id="SSF47113">
    <property type="entry name" value="Histone-fold"/>
    <property type="match status" value="1"/>
</dbReference>
<dbReference type="PROSITE" id="PS00357">
    <property type="entry name" value="HISTONE_H2B"/>
    <property type="match status" value="1"/>
</dbReference>